<accession>Q5UPJ2</accession>
<sequence length="112" mass="13756">MYWEFFDCVIFYYHKMEYSEKKEKIFETAEKFGMDFIDLQEKCNFWNQITLTGRRECKEVKKDFMKDFLSMAKNSVDFIEQQAHQQQINQHRQSHNRQTIVRDGNTIDCIMM</sequence>
<dbReference type="EMBL" id="AY653733">
    <property type="protein sequence ID" value="AAV50392.1"/>
    <property type="molecule type" value="Genomic_DNA"/>
</dbReference>
<dbReference type="KEGG" id="vg:9924716"/>
<dbReference type="OrthoDB" id="40922at10239"/>
<dbReference type="Proteomes" id="UP000001134">
    <property type="component" value="Genome"/>
</dbReference>
<reference key="1">
    <citation type="journal article" date="2004" name="Science">
        <title>The 1.2-megabase genome sequence of Mimivirus.</title>
        <authorList>
            <person name="Raoult D."/>
            <person name="Audic S."/>
            <person name="Robert C."/>
            <person name="Abergel C."/>
            <person name="Renesto P."/>
            <person name="Ogata H."/>
            <person name="La Scola B."/>
            <person name="Susan M."/>
            <person name="Claverie J.-M."/>
        </authorList>
    </citation>
    <scope>NUCLEOTIDE SEQUENCE [LARGE SCALE GENOMIC DNA]</scope>
    <source>
        <strain>Rowbotham-Bradford</strain>
    </source>
</reference>
<proteinExistence type="predicted"/>
<organism>
    <name type="scientific">Acanthamoeba polyphaga mimivirus</name>
    <name type="common">APMV</name>
    <dbReference type="NCBI Taxonomy" id="212035"/>
    <lineage>
        <taxon>Viruses</taxon>
        <taxon>Varidnaviria</taxon>
        <taxon>Bamfordvirae</taxon>
        <taxon>Nucleocytoviricota</taxon>
        <taxon>Megaviricetes</taxon>
        <taxon>Imitervirales</taxon>
        <taxon>Mimiviridae</taxon>
        <taxon>Megamimivirinae</taxon>
        <taxon>Mimivirus</taxon>
        <taxon>Mimivirus bradfordmassiliense</taxon>
    </lineage>
</organism>
<name>YL117_MIMIV</name>
<organismHost>
    <name type="scientific">Acanthamoeba polyphaga</name>
    <name type="common">Amoeba</name>
    <dbReference type="NCBI Taxonomy" id="5757"/>
</organismHost>
<keyword id="KW-1185">Reference proteome</keyword>
<protein>
    <recommendedName>
        <fullName>Uncharacterized protein L117</fullName>
    </recommendedName>
</protein>
<feature type="chain" id="PRO_0000243996" description="Uncharacterized protein L117">
    <location>
        <begin position="1"/>
        <end position="112"/>
    </location>
</feature>
<gene>
    <name type="ordered locus">MIMI_L117</name>
</gene>